<feature type="chain" id="PRO_0000073345" description="ATP synthase gamma chain">
    <location>
        <begin position="1"/>
        <end position="286"/>
    </location>
</feature>
<sequence>MAGAKEIRSKIASIKSTQKITNAMEKVAVSKMRKAQMRMAAGRPYAERIRQVIGHLANANPEYRHPFMVEREVKRVGYIVVSSDRGLCGGLNINLFKSLVKDMSGYREQGAEIDLCVIGSKGASFFRSFGGNVVAAISHLGEEPSINDLIGSVKVMLDAYLEGRIDRLFVVSNKFVNTMTQKPTVEQLIPLVADDDQELKHHWDYLYEPDAKSLLDGLLVRYVESQVYQAVVENNACEQAARMIAMKNATDNAGELISDLQLIYNKARQAAITQEISEIVGGAAAV</sequence>
<protein>
    <recommendedName>
        <fullName evidence="1">ATP synthase gamma chain</fullName>
    </recommendedName>
    <alternativeName>
        <fullName evidence="1">ATP synthase F1 sector gamma subunit</fullName>
    </alternativeName>
    <alternativeName>
        <fullName evidence="1">F-ATPase gamma subunit</fullName>
    </alternativeName>
</protein>
<name>ATPG_PSEAE</name>
<organism>
    <name type="scientific">Pseudomonas aeruginosa (strain ATCC 15692 / DSM 22644 / CIP 104116 / JCM 14847 / LMG 12228 / 1C / PRS 101 / PAO1)</name>
    <dbReference type="NCBI Taxonomy" id="208964"/>
    <lineage>
        <taxon>Bacteria</taxon>
        <taxon>Pseudomonadati</taxon>
        <taxon>Pseudomonadota</taxon>
        <taxon>Gammaproteobacteria</taxon>
        <taxon>Pseudomonadales</taxon>
        <taxon>Pseudomonadaceae</taxon>
        <taxon>Pseudomonas</taxon>
    </lineage>
</organism>
<gene>
    <name evidence="1" type="primary">atpG</name>
    <name type="ordered locus">PA5555</name>
</gene>
<comment type="function">
    <text evidence="1">Produces ATP from ADP in the presence of a proton gradient across the membrane. The gamma chain is believed to be important in regulating ATPase activity and the flow of protons through the CF(0) complex.</text>
</comment>
<comment type="subunit">
    <text evidence="1">F-type ATPases have 2 components, CF(1) - the catalytic core - and CF(0) - the membrane proton channel. CF(1) has five subunits: alpha(3), beta(3), gamma(1), delta(1), epsilon(1). CF(0) has three main subunits: a, b and c.</text>
</comment>
<comment type="subcellular location">
    <subcellularLocation>
        <location evidence="1">Cell inner membrane</location>
        <topology evidence="1">Peripheral membrane protein</topology>
    </subcellularLocation>
</comment>
<comment type="similarity">
    <text evidence="1">Belongs to the ATPase gamma chain family.</text>
</comment>
<evidence type="ECO:0000255" key="1">
    <source>
        <dbReference type="HAMAP-Rule" id="MF_00815"/>
    </source>
</evidence>
<accession>Q9HT19</accession>
<dbReference type="EMBL" id="AE004091">
    <property type="protein sequence ID" value="AAG08940.1"/>
    <property type="molecule type" value="Genomic_DNA"/>
</dbReference>
<dbReference type="PIR" id="D82952">
    <property type="entry name" value="D82952"/>
</dbReference>
<dbReference type="RefSeq" id="NP_254242.1">
    <property type="nucleotide sequence ID" value="NC_002516.2"/>
</dbReference>
<dbReference type="RefSeq" id="WP_003097132.1">
    <property type="nucleotide sequence ID" value="NZ_QZGE01000012.1"/>
</dbReference>
<dbReference type="SMR" id="Q9HT19"/>
<dbReference type="FunCoup" id="Q9HT19">
    <property type="interactions" value="538"/>
</dbReference>
<dbReference type="STRING" id="208964.PA5555"/>
<dbReference type="PaxDb" id="208964-PA5555"/>
<dbReference type="GeneID" id="77224108"/>
<dbReference type="GeneID" id="877751"/>
<dbReference type="KEGG" id="pae:PA5555"/>
<dbReference type="PATRIC" id="fig|208964.12.peg.5821"/>
<dbReference type="PseudoCAP" id="PA5555"/>
<dbReference type="HOGENOM" id="CLU_050669_0_1_6"/>
<dbReference type="InParanoid" id="Q9HT19"/>
<dbReference type="OrthoDB" id="9812769at2"/>
<dbReference type="PhylomeDB" id="Q9HT19"/>
<dbReference type="BioCyc" id="PAER208964:G1FZ6-5682-MONOMER"/>
<dbReference type="Proteomes" id="UP000002438">
    <property type="component" value="Chromosome"/>
</dbReference>
<dbReference type="GO" id="GO:0005886">
    <property type="term" value="C:plasma membrane"/>
    <property type="evidence" value="ECO:0007669"/>
    <property type="project" value="UniProtKB-SubCell"/>
</dbReference>
<dbReference type="GO" id="GO:0045259">
    <property type="term" value="C:proton-transporting ATP synthase complex"/>
    <property type="evidence" value="ECO:0007669"/>
    <property type="project" value="UniProtKB-KW"/>
</dbReference>
<dbReference type="GO" id="GO:0005524">
    <property type="term" value="F:ATP binding"/>
    <property type="evidence" value="ECO:0007669"/>
    <property type="project" value="UniProtKB-UniRule"/>
</dbReference>
<dbReference type="GO" id="GO:0046933">
    <property type="term" value="F:proton-transporting ATP synthase activity, rotational mechanism"/>
    <property type="evidence" value="ECO:0007669"/>
    <property type="project" value="UniProtKB-UniRule"/>
</dbReference>
<dbReference type="GO" id="GO:0015986">
    <property type="term" value="P:proton motive force-driven ATP synthesis"/>
    <property type="evidence" value="ECO:0000318"/>
    <property type="project" value="GO_Central"/>
</dbReference>
<dbReference type="GO" id="GO:0042777">
    <property type="term" value="P:proton motive force-driven plasma membrane ATP synthesis"/>
    <property type="evidence" value="ECO:0007669"/>
    <property type="project" value="UniProtKB-UniRule"/>
</dbReference>
<dbReference type="CDD" id="cd12151">
    <property type="entry name" value="F1-ATPase_gamma"/>
    <property type="match status" value="1"/>
</dbReference>
<dbReference type="FunFam" id="1.10.287.80:FF:000005">
    <property type="entry name" value="ATP synthase gamma chain"/>
    <property type="match status" value="1"/>
</dbReference>
<dbReference type="FunFam" id="3.40.1380.10:FF:000001">
    <property type="entry name" value="ATP synthase gamma chain"/>
    <property type="match status" value="1"/>
</dbReference>
<dbReference type="Gene3D" id="3.40.1380.10">
    <property type="match status" value="1"/>
</dbReference>
<dbReference type="Gene3D" id="1.10.287.80">
    <property type="entry name" value="ATP synthase, gamma subunit, helix hairpin domain"/>
    <property type="match status" value="1"/>
</dbReference>
<dbReference type="HAMAP" id="MF_00815">
    <property type="entry name" value="ATP_synth_gamma_bact"/>
    <property type="match status" value="1"/>
</dbReference>
<dbReference type="InterPro" id="IPR035968">
    <property type="entry name" value="ATP_synth_F1_ATPase_gsu"/>
</dbReference>
<dbReference type="InterPro" id="IPR000131">
    <property type="entry name" value="ATP_synth_F1_gsu"/>
</dbReference>
<dbReference type="InterPro" id="IPR023632">
    <property type="entry name" value="ATP_synth_F1_gsu_CS"/>
</dbReference>
<dbReference type="NCBIfam" id="TIGR01146">
    <property type="entry name" value="ATPsyn_F1gamma"/>
    <property type="match status" value="1"/>
</dbReference>
<dbReference type="NCBIfam" id="NF004144">
    <property type="entry name" value="PRK05621.1-1"/>
    <property type="match status" value="1"/>
</dbReference>
<dbReference type="PANTHER" id="PTHR11693">
    <property type="entry name" value="ATP SYNTHASE GAMMA CHAIN"/>
    <property type="match status" value="1"/>
</dbReference>
<dbReference type="PANTHER" id="PTHR11693:SF22">
    <property type="entry name" value="ATP SYNTHASE SUBUNIT GAMMA, MITOCHONDRIAL"/>
    <property type="match status" value="1"/>
</dbReference>
<dbReference type="Pfam" id="PF00231">
    <property type="entry name" value="ATP-synt"/>
    <property type="match status" value="1"/>
</dbReference>
<dbReference type="PRINTS" id="PR00126">
    <property type="entry name" value="ATPASEGAMMA"/>
</dbReference>
<dbReference type="SUPFAM" id="SSF52943">
    <property type="entry name" value="ATP synthase (F1-ATPase), gamma subunit"/>
    <property type="match status" value="1"/>
</dbReference>
<dbReference type="PROSITE" id="PS00153">
    <property type="entry name" value="ATPASE_GAMMA"/>
    <property type="match status" value="1"/>
</dbReference>
<proteinExistence type="inferred from homology"/>
<keyword id="KW-0066">ATP synthesis</keyword>
<keyword id="KW-0997">Cell inner membrane</keyword>
<keyword id="KW-1003">Cell membrane</keyword>
<keyword id="KW-0139">CF(1)</keyword>
<keyword id="KW-0375">Hydrogen ion transport</keyword>
<keyword id="KW-0406">Ion transport</keyword>
<keyword id="KW-0472">Membrane</keyword>
<keyword id="KW-1185">Reference proteome</keyword>
<keyword id="KW-0813">Transport</keyword>
<reference key="1">
    <citation type="journal article" date="2000" name="Nature">
        <title>Complete genome sequence of Pseudomonas aeruginosa PAO1, an opportunistic pathogen.</title>
        <authorList>
            <person name="Stover C.K."/>
            <person name="Pham X.-Q.T."/>
            <person name="Erwin A.L."/>
            <person name="Mizoguchi S.D."/>
            <person name="Warrener P."/>
            <person name="Hickey M.J."/>
            <person name="Brinkman F.S.L."/>
            <person name="Hufnagle W.O."/>
            <person name="Kowalik D.J."/>
            <person name="Lagrou M."/>
            <person name="Garber R.L."/>
            <person name="Goltry L."/>
            <person name="Tolentino E."/>
            <person name="Westbrock-Wadman S."/>
            <person name="Yuan Y."/>
            <person name="Brody L.L."/>
            <person name="Coulter S.N."/>
            <person name="Folger K.R."/>
            <person name="Kas A."/>
            <person name="Larbig K."/>
            <person name="Lim R.M."/>
            <person name="Smith K.A."/>
            <person name="Spencer D.H."/>
            <person name="Wong G.K.-S."/>
            <person name="Wu Z."/>
            <person name="Paulsen I.T."/>
            <person name="Reizer J."/>
            <person name="Saier M.H. Jr."/>
            <person name="Hancock R.E.W."/>
            <person name="Lory S."/>
            <person name="Olson M.V."/>
        </authorList>
    </citation>
    <scope>NUCLEOTIDE SEQUENCE [LARGE SCALE GENOMIC DNA]</scope>
    <source>
        <strain>ATCC 15692 / DSM 22644 / CIP 104116 / JCM 14847 / LMG 12228 / 1C / PRS 101 / PAO1</strain>
    </source>
</reference>